<name>RECR_STRTR</name>
<keyword id="KW-0227">DNA damage</keyword>
<keyword id="KW-0233">DNA recombination</keyword>
<keyword id="KW-0234">DNA repair</keyword>
<keyword id="KW-0479">Metal-binding</keyword>
<keyword id="KW-0862">Zinc</keyword>
<keyword id="KW-0863">Zinc-finger</keyword>
<evidence type="ECO:0000255" key="1">
    <source>
        <dbReference type="HAMAP-Rule" id="MF_00017"/>
    </source>
</evidence>
<sequence>MLYPTPIAKLIDSFSKLPGIGAKTATRLAFYTISMSDEDVNDFAKNLLAAKRELTYCSVCGRLTDDDPCIICTDETRDRTKILVVEDSKDVSAMEKIQEYRGLYHVLQGLISPMNGVGPDDINLKSLITRLMDSEVDEVIIATNATADGEATSMYISRVLKPAGIKVTRLARGLAVGSDIEYADEVTLLRAIENRTEL</sequence>
<dbReference type="EMBL" id="U58210">
    <property type="protein sequence ID" value="AAC44615.1"/>
    <property type="molecule type" value="Genomic_DNA"/>
</dbReference>
<dbReference type="RefSeq" id="WP_011225694.1">
    <property type="nucleotide sequence ID" value="NZ_RIVR01000007.1"/>
</dbReference>
<dbReference type="SMR" id="P96053"/>
<dbReference type="GeneID" id="66898520"/>
<dbReference type="PATRIC" id="fig|264199.4.peg.623"/>
<dbReference type="eggNOG" id="COG0353">
    <property type="taxonomic scope" value="Bacteria"/>
</dbReference>
<dbReference type="OMA" id="DVMAIEN"/>
<dbReference type="GO" id="GO:0003677">
    <property type="term" value="F:DNA binding"/>
    <property type="evidence" value="ECO:0007669"/>
    <property type="project" value="UniProtKB-UniRule"/>
</dbReference>
<dbReference type="GO" id="GO:0008270">
    <property type="term" value="F:zinc ion binding"/>
    <property type="evidence" value="ECO:0007669"/>
    <property type="project" value="UniProtKB-KW"/>
</dbReference>
<dbReference type="GO" id="GO:0006310">
    <property type="term" value="P:DNA recombination"/>
    <property type="evidence" value="ECO:0007669"/>
    <property type="project" value="UniProtKB-UniRule"/>
</dbReference>
<dbReference type="GO" id="GO:0006281">
    <property type="term" value="P:DNA repair"/>
    <property type="evidence" value="ECO:0007669"/>
    <property type="project" value="UniProtKB-UniRule"/>
</dbReference>
<dbReference type="CDD" id="cd01025">
    <property type="entry name" value="TOPRIM_recR"/>
    <property type="match status" value="1"/>
</dbReference>
<dbReference type="Gene3D" id="3.30.60.80">
    <property type="match status" value="1"/>
</dbReference>
<dbReference type="Gene3D" id="3.40.1360.10">
    <property type="match status" value="1"/>
</dbReference>
<dbReference type="Gene3D" id="6.10.250.240">
    <property type="match status" value="1"/>
</dbReference>
<dbReference type="Gene3D" id="1.10.8.420">
    <property type="entry name" value="RecR Domain 1"/>
    <property type="match status" value="1"/>
</dbReference>
<dbReference type="HAMAP" id="MF_00017">
    <property type="entry name" value="RecR"/>
    <property type="match status" value="1"/>
</dbReference>
<dbReference type="InterPro" id="IPR000093">
    <property type="entry name" value="DNA_Rcmb_RecR"/>
</dbReference>
<dbReference type="InterPro" id="IPR023627">
    <property type="entry name" value="Rcmb_RecR"/>
</dbReference>
<dbReference type="InterPro" id="IPR015967">
    <property type="entry name" value="Rcmb_RecR_Znf"/>
</dbReference>
<dbReference type="InterPro" id="IPR006171">
    <property type="entry name" value="TOPRIM_dom"/>
</dbReference>
<dbReference type="InterPro" id="IPR034137">
    <property type="entry name" value="TOPRIM_RecR"/>
</dbReference>
<dbReference type="NCBIfam" id="TIGR00615">
    <property type="entry name" value="recR"/>
    <property type="match status" value="1"/>
</dbReference>
<dbReference type="PANTHER" id="PTHR30446">
    <property type="entry name" value="RECOMBINATION PROTEIN RECR"/>
    <property type="match status" value="1"/>
</dbReference>
<dbReference type="PANTHER" id="PTHR30446:SF0">
    <property type="entry name" value="RECOMBINATION PROTEIN RECR"/>
    <property type="match status" value="1"/>
</dbReference>
<dbReference type="Pfam" id="PF21175">
    <property type="entry name" value="RecR_C"/>
    <property type="match status" value="1"/>
</dbReference>
<dbReference type="Pfam" id="PF21176">
    <property type="entry name" value="RecR_HhH"/>
    <property type="match status" value="1"/>
</dbReference>
<dbReference type="Pfam" id="PF13662">
    <property type="entry name" value="Toprim_4"/>
    <property type="match status" value="1"/>
</dbReference>
<dbReference type="SMART" id="SM00493">
    <property type="entry name" value="TOPRIM"/>
    <property type="match status" value="1"/>
</dbReference>
<dbReference type="SUPFAM" id="SSF111304">
    <property type="entry name" value="Recombination protein RecR"/>
    <property type="match status" value="1"/>
</dbReference>
<dbReference type="PROSITE" id="PS01300">
    <property type="entry name" value="RECR"/>
    <property type="match status" value="1"/>
</dbReference>
<dbReference type="PROSITE" id="PS50880">
    <property type="entry name" value="TOPRIM"/>
    <property type="match status" value="1"/>
</dbReference>
<feature type="chain" id="PRO_0000190406" description="Recombination protein RecR">
    <location>
        <begin position="1"/>
        <end position="198"/>
    </location>
</feature>
<feature type="domain" description="Toprim" evidence="1">
    <location>
        <begin position="80"/>
        <end position="175"/>
    </location>
</feature>
<feature type="zinc finger region" description="C4-type" evidence="1">
    <location>
        <begin position="57"/>
        <end position="72"/>
    </location>
</feature>
<comment type="function">
    <text evidence="1">May play a role in DNA repair. It seems to be involved in an RecBC-independent recombinational process of DNA repair. It may act with RecF and RecO.</text>
</comment>
<comment type="similarity">
    <text evidence="1">Belongs to the RecR family.</text>
</comment>
<reference key="1">
    <citation type="journal article" date="1996" name="Mol. Microbiol.">
        <title>Disruption of the gene encoding penicillin-binding protein 2b (pbp2b) causes altered cell morphology and cease in exopolysaccharide production in Streptococcus thermophilus Sfi6.</title>
        <authorList>
            <person name="Stingele F."/>
            <person name="Mollet B."/>
        </authorList>
    </citation>
    <scope>NUCLEOTIDE SEQUENCE [GENOMIC DNA]</scope>
    <source>
        <strain>Sfi6</strain>
    </source>
</reference>
<gene>
    <name evidence="1" type="primary">recR</name>
    <name type="synonym">recM</name>
</gene>
<proteinExistence type="inferred from homology"/>
<accession>P96053</accession>
<protein>
    <recommendedName>
        <fullName evidence="1">Recombination protein RecR</fullName>
    </recommendedName>
</protein>
<organism>
    <name type="scientific">Streptococcus thermophilus</name>
    <dbReference type="NCBI Taxonomy" id="1308"/>
    <lineage>
        <taxon>Bacteria</taxon>
        <taxon>Bacillati</taxon>
        <taxon>Bacillota</taxon>
        <taxon>Bacilli</taxon>
        <taxon>Lactobacillales</taxon>
        <taxon>Streptococcaceae</taxon>
        <taxon>Streptococcus</taxon>
    </lineage>
</organism>